<organism>
    <name type="scientific">Schizosaccharomyces pombe (strain 972 / ATCC 24843)</name>
    <name type="common">Fission yeast</name>
    <dbReference type="NCBI Taxonomy" id="284812"/>
    <lineage>
        <taxon>Eukaryota</taxon>
        <taxon>Fungi</taxon>
        <taxon>Dikarya</taxon>
        <taxon>Ascomycota</taxon>
        <taxon>Taphrinomycotina</taxon>
        <taxon>Schizosaccharomycetes</taxon>
        <taxon>Schizosaccharomycetales</taxon>
        <taxon>Schizosaccharomycetaceae</taxon>
        <taxon>Schizosaccharomyces</taxon>
    </lineage>
</organism>
<gene>
    <name type="ORF">pi069</name>
    <name type="ORF">SPBC27B12.09c</name>
</gene>
<proteinExistence type="inferred from homology"/>
<comment type="subcellular location">
    <subcellularLocation>
        <location evidence="2">Mitochondrion inner membrane</location>
        <topology evidence="2">Multi-pass membrane protein</topology>
    </subcellularLocation>
</comment>
<comment type="similarity">
    <text evidence="3">Belongs to the mitochondrial carrier (TC 2.A.29) family.</text>
</comment>
<name>YBC9_SCHPO</name>
<sequence length="277" mass="30858">MDQAIAGLAAGTASTLIMHPLDLAKIQMQASMNQDSKSLFQVFKSNIGSNGSIRSLYHGLSINVLGSAASWGAYFCIYDFSKRVVMSMTPFNNGEISVLQTLCSSGFAGCIVAALTNPIWVVKSRILSKRVNYTNPFFGFYDLIKNEGLRGCYAGFAPSLLGVSQGALQFMAYEKLKLWKQRRPTSLDYIFMSAASKVFAAVNMYPLLVIRTRLQVMRSPHRSIMNLVLQTWRLQGILGFYKGFLPHLLRVVPQTCITFLVYEQVGMHFKTQSSKSQ</sequence>
<dbReference type="EMBL" id="AB004539">
    <property type="protein sequence ID" value="BAA21451.1"/>
    <property type="molecule type" value="Genomic_DNA"/>
</dbReference>
<dbReference type="EMBL" id="CU329671">
    <property type="protein sequence ID" value="CAA16904.1"/>
    <property type="molecule type" value="Genomic_DNA"/>
</dbReference>
<dbReference type="PIR" id="T40033">
    <property type="entry name" value="T40033"/>
</dbReference>
<dbReference type="SMR" id="O13660"/>
<dbReference type="BioGRID" id="276899">
    <property type="interactions" value="1"/>
</dbReference>
<dbReference type="FunCoup" id="O13660">
    <property type="interactions" value="430"/>
</dbReference>
<dbReference type="STRING" id="284812.O13660"/>
<dbReference type="PaxDb" id="4896-SPBC27B12.09c.1"/>
<dbReference type="EnsemblFungi" id="SPBC27B12.09c.1">
    <property type="protein sequence ID" value="SPBC27B12.09c.1:pep"/>
    <property type="gene ID" value="SPBC27B12.09c"/>
</dbReference>
<dbReference type="KEGG" id="spo:2540370"/>
<dbReference type="PomBase" id="SPBC27B12.09c"/>
<dbReference type="VEuPathDB" id="FungiDB:SPBC27B12.09c"/>
<dbReference type="eggNOG" id="KOG0764">
    <property type="taxonomic scope" value="Eukaryota"/>
</dbReference>
<dbReference type="HOGENOM" id="CLU_015166_6_4_1"/>
<dbReference type="InParanoid" id="O13660"/>
<dbReference type="OMA" id="TTVWKHE"/>
<dbReference type="PhylomeDB" id="O13660"/>
<dbReference type="Reactome" id="R-SPO-196757">
    <property type="pathway name" value="Metabolism of folate and pterines"/>
</dbReference>
<dbReference type="PRO" id="PR:O13660"/>
<dbReference type="Proteomes" id="UP000002485">
    <property type="component" value="Chromosome II"/>
</dbReference>
<dbReference type="GO" id="GO:0005743">
    <property type="term" value="C:mitochondrial inner membrane"/>
    <property type="evidence" value="ECO:0000255"/>
    <property type="project" value="PomBase"/>
</dbReference>
<dbReference type="GO" id="GO:0005739">
    <property type="term" value="C:mitochondrion"/>
    <property type="evidence" value="ECO:0007005"/>
    <property type="project" value="PomBase"/>
</dbReference>
<dbReference type="GO" id="GO:0015230">
    <property type="term" value="F:FAD transmembrane transporter activity"/>
    <property type="evidence" value="ECO:0000318"/>
    <property type="project" value="GO_Central"/>
</dbReference>
<dbReference type="GO" id="GO:0008517">
    <property type="term" value="F:folic acid transmembrane transporter activity"/>
    <property type="evidence" value="ECO:0000318"/>
    <property type="project" value="GO_Central"/>
</dbReference>
<dbReference type="GO" id="GO:1990548">
    <property type="term" value="P:mitochondrial FAD transmembrane transport"/>
    <property type="evidence" value="ECO:0000250"/>
    <property type="project" value="PomBase"/>
</dbReference>
<dbReference type="GO" id="GO:0055085">
    <property type="term" value="P:transmembrane transport"/>
    <property type="evidence" value="ECO:0000318"/>
    <property type="project" value="GO_Central"/>
</dbReference>
<dbReference type="FunFam" id="1.50.40.10:FF:000102">
    <property type="entry name" value="Folate carrier protein Flx1"/>
    <property type="match status" value="1"/>
</dbReference>
<dbReference type="Gene3D" id="1.50.40.10">
    <property type="entry name" value="Mitochondrial carrier domain"/>
    <property type="match status" value="1"/>
</dbReference>
<dbReference type="InterPro" id="IPR018108">
    <property type="entry name" value="Mitochondrial_sb/sol_carrier"/>
</dbReference>
<dbReference type="InterPro" id="IPR023395">
    <property type="entry name" value="Mt_carrier_dom_sf"/>
</dbReference>
<dbReference type="InterPro" id="IPR044712">
    <property type="entry name" value="SLC25A32-like"/>
</dbReference>
<dbReference type="PANTHER" id="PTHR45683">
    <property type="entry name" value="MITOCHONDRIAL NICOTINAMIDE ADENINE DINUCLEOTIDE TRANSPORTER 1-RELATED-RELATED"/>
    <property type="match status" value="1"/>
</dbReference>
<dbReference type="Pfam" id="PF00153">
    <property type="entry name" value="Mito_carr"/>
    <property type="match status" value="3"/>
</dbReference>
<dbReference type="SUPFAM" id="SSF103506">
    <property type="entry name" value="Mitochondrial carrier"/>
    <property type="match status" value="1"/>
</dbReference>
<dbReference type="PROSITE" id="PS50920">
    <property type="entry name" value="SOLCAR"/>
    <property type="match status" value="3"/>
</dbReference>
<accession>O13660</accession>
<reference key="1">
    <citation type="journal article" date="2000" name="Yeast">
        <title>A 38 kb segment containing the cdc2 gene from the left arm of fission yeast chromosome II: sequence analysis and characterization of the genomic DNA and cDNAs encoded on the segment.</title>
        <authorList>
            <person name="Machida M."/>
            <person name="Yamazaki S."/>
            <person name="Kunihiro S."/>
            <person name="Tanaka T."/>
            <person name="Kushida N."/>
            <person name="Jinno K."/>
            <person name="Haikawa Y."/>
            <person name="Yamazaki J."/>
            <person name="Yamamoto S."/>
            <person name="Sekine M."/>
            <person name="Oguchi A."/>
            <person name="Nagai Y."/>
            <person name="Sakai M."/>
            <person name="Aoki K."/>
            <person name="Ogura K."/>
            <person name="Kudoh Y."/>
            <person name="Kikuchi H."/>
            <person name="Zhang M.Q."/>
            <person name="Yanagida M."/>
        </authorList>
    </citation>
    <scope>NUCLEOTIDE SEQUENCE [LARGE SCALE GENOMIC DNA]</scope>
    <source>
        <strain>972 / ATCC 24843</strain>
    </source>
</reference>
<reference key="2">
    <citation type="journal article" date="2002" name="Nature">
        <title>The genome sequence of Schizosaccharomyces pombe.</title>
        <authorList>
            <person name="Wood V."/>
            <person name="Gwilliam R."/>
            <person name="Rajandream M.A."/>
            <person name="Lyne M.H."/>
            <person name="Lyne R."/>
            <person name="Stewart A."/>
            <person name="Sgouros J.G."/>
            <person name="Peat N."/>
            <person name="Hayles J."/>
            <person name="Baker S.G."/>
            <person name="Basham D."/>
            <person name="Bowman S."/>
            <person name="Brooks K."/>
            <person name="Brown D."/>
            <person name="Brown S."/>
            <person name="Chillingworth T."/>
            <person name="Churcher C.M."/>
            <person name="Collins M."/>
            <person name="Connor R."/>
            <person name="Cronin A."/>
            <person name="Davis P."/>
            <person name="Feltwell T."/>
            <person name="Fraser A."/>
            <person name="Gentles S."/>
            <person name="Goble A."/>
            <person name="Hamlin N."/>
            <person name="Harris D.E."/>
            <person name="Hidalgo J."/>
            <person name="Hodgson G."/>
            <person name="Holroyd S."/>
            <person name="Hornsby T."/>
            <person name="Howarth S."/>
            <person name="Huckle E.J."/>
            <person name="Hunt S."/>
            <person name="Jagels K."/>
            <person name="James K.D."/>
            <person name="Jones L."/>
            <person name="Jones M."/>
            <person name="Leather S."/>
            <person name="McDonald S."/>
            <person name="McLean J."/>
            <person name="Mooney P."/>
            <person name="Moule S."/>
            <person name="Mungall K.L."/>
            <person name="Murphy L.D."/>
            <person name="Niblett D."/>
            <person name="Odell C."/>
            <person name="Oliver K."/>
            <person name="O'Neil S."/>
            <person name="Pearson D."/>
            <person name="Quail M.A."/>
            <person name="Rabbinowitsch E."/>
            <person name="Rutherford K.M."/>
            <person name="Rutter S."/>
            <person name="Saunders D."/>
            <person name="Seeger K."/>
            <person name="Sharp S."/>
            <person name="Skelton J."/>
            <person name="Simmonds M.N."/>
            <person name="Squares R."/>
            <person name="Squares S."/>
            <person name="Stevens K."/>
            <person name="Taylor K."/>
            <person name="Taylor R.G."/>
            <person name="Tivey A."/>
            <person name="Walsh S.V."/>
            <person name="Warren T."/>
            <person name="Whitehead S."/>
            <person name="Woodward J.R."/>
            <person name="Volckaert G."/>
            <person name="Aert R."/>
            <person name="Robben J."/>
            <person name="Grymonprez B."/>
            <person name="Weltjens I."/>
            <person name="Vanstreels E."/>
            <person name="Rieger M."/>
            <person name="Schaefer M."/>
            <person name="Mueller-Auer S."/>
            <person name="Gabel C."/>
            <person name="Fuchs M."/>
            <person name="Duesterhoeft A."/>
            <person name="Fritzc C."/>
            <person name="Holzer E."/>
            <person name="Moestl D."/>
            <person name="Hilbert H."/>
            <person name="Borzym K."/>
            <person name="Langer I."/>
            <person name="Beck A."/>
            <person name="Lehrach H."/>
            <person name="Reinhardt R."/>
            <person name="Pohl T.M."/>
            <person name="Eger P."/>
            <person name="Zimmermann W."/>
            <person name="Wedler H."/>
            <person name="Wambutt R."/>
            <person name="Purnelle B."/>
            <person name="Goffeau A."/>
            <person name="Cadieu E."/>
            <person name="Dreano S."/>
            <person name="Gloux S."/>
            <person name="Lelaure V."/>
            <person name="Mottier S."/>
            <person name="Galibert F."/>
            <person name="Aves S.J."/>
            <person name="Xiang Z."/>
            <person name="Hunt C."/>
            <person name="Moore K."/>
            <person name="Hurst S.M."/>
            <person name="Lucas M."/>
            <person name="Rochet M."/>
            <person name="Gaillardin C."/>
            <person name="Tallada V.A."/>
            <person name="Garzon A."/>
            <person name="Thode G."/>
            <person name="Daga R.R."/>
            <person name="Cruzado L."/>
            <person name="Jimenez J."/>
            <person name="Sanchez M."/>
            <person name="del Rey F."/>
            <person name="Benito J."/>
            <person name="Dominguez A."/>
            <person name="Revuelta J.L."/>
            <person name="Moreno S."/>
            <person name="Armstrong J."/>
            <person name="Forsburg S.L."/>
            <person name="Cerutti L."/>
            <person name="Lowe T."/>
            <person name="McCombie W.R."/>
            <person name="Paulsen I."/>
            <person name="Potashkin J."/>
            <person name="Shpakovski G.V."/>
            <person name="Ussery D."/>
            <person name="Barrell B.G."/>
            <person name="Nurse P."/>
        </authorList>
    </citation>
    <scope>NUCLEOTIDE SEQUENCE [LARGE SCALE GENOMIC DNA]</scope>
    <source>
        <strain>972 / ATCC 24843</strain>
    </source>
</reference>
<reference key="3">
    <citation type="journal article" date="2006" name="Nat. Biotechnol.">
        <title>ORFeome cloning and global analysis of protein localization in the fission yeast Schizosaccharomyces pombe.</title>
        <authorList>
            <person name="Matsuyama A."/>
            <person name="Arai R."/>
            <person name="Yashiroda Y."/>
            <person name="Shirai A."/>
            <person name="Kamata A."/>
            <person name="Sekido S."/>
            <person name="Kobayashi Y."/>
            <person name="Hashimoto A."/>
            <person name="Hamamoto M."/>
            <person name="Hiraoka Y."/>
            <person name="Horinouchi S."/>
            <person name="Yoshida M."/>
        </authorList>
    </citation>
    <scope>SUBCELLULAR LOCATION [LARGE SCALE ANALYSIS]</scope>
</reference>
<feature type="chain" id="PRO_0000310790" description="Uncharacterized mitochondrial carrier C27B12.09c">
    <location>
        <begin position="1"/>
        <end position="277"/>
    </location>
</feature>
<feature type="transmembrane region" description="Helical; Name=1" evidence="1">
    <location>
        <begin position="3"/>
        <end position="24"/>
    </location>
</feature>
<feature type="transmembrane region" description="Helical; Name=2" evidence="1">
    <location>
        <begin position="60"/>
        <end position="80"/>
    </location>
</feature>
<feature type="transmembrane region" description="Helical; Name=3" evidence="1">
    <location>
        <begin position="102"/>
        <end position="122"/>
    </location>
</feature>
<feature type="transmembrane region" description="Helical; Name=4" evidence="1">
    <location>
        <begin position="152"/>
        <end position="172"/>
    </location>
</feature>
<feature type="transmembrane region" description="Helical; Name=5" evidence="1">
    <location>
        <begin position="190"/>
        <end position="210"/>
    </location>
</feature>
<feature type="transmembrane region" description="Helical; Name=6" evidence="1">
    <location>
        <begin position="240"/>
        <end position="261"/>
    </location>
</feature>
<feature type="repeat" description="Solcar 1">
    <location>
        <begin position="1"/>
        <end position="84"/>
    </location>
</feature>
<feature type="repeat" description="Solcar 2">
    <location>
        <begin position="96"/>
        <end position="179"/>
    </location>
</feature>
<feature type="repeat" description="Solcar 3">
    <location>
        <begin position="184"/>
        <end position="268"/>
    </location>
</feature>
<evidence type="ECO:0000255" key="1"/>
<evidence type="ECO:0000269" key="2">
    <source>
    </source>
</evidence>
<evidence type="ECO:0000305" key="3"/>
<protein>
    <recommendedName>
        <fullName>Uncharacterized mitochondrial carrier C27B12.09c</fullName>
    </recommendedName>
</protein>
<keyword id="KW-0472">Membrane</keyword>
<keyword id="KW-0496">Mitochondrion</keyword>
<keyword id="KW-0999">Mitochondrion inner membrane</keyword>
<keyword id="KW-1185">Reference proteome</keyword>
<keyword id="KW-0677">Repeat</keyword>
<keyword id="KW-0812">Transmembrane</keyword>
<keyword id="KW-1133">Transmembrane helix</keyword>
<keyword id="KW-0813">Transport</keyword>